<reference key="1">
    <citation type="journal article" date="2001" name="Proc. Natl. Acad. Sci. U.S.A.">
        <title>Genome sequence of an industrial microorganism Streptomyces avermitilis: deducing the ability of producing secondary metabolites.</title>
        <authorList>
            <person name="Omura S."/>
            <person name="Ikeda H."/>
            <person name="Ishikawa J."/>
            <person name="Hanamoto A."/>
            <person name="Takahashi C."/>
            <person name="Shinose M."/>
            <person name="Takahashi Y."/>
            <person name="Horikawa H."/>
            <person name="Nakazawa H."/>
            <person name="Osonoe T."/>
            <person name="Kikuchi H."/>
            <person name="Shiba T."/>
            <person name="Sakaki Y."/>
            <person name="Hattori M."/>
        </authorList>
    </citation>
    <scope>NUCLEOTIDE SEQUENCE [LARGE SCALE GENOMIC DNA]</scope>
    <source>
        <strain>ATCC 31267 / DSM 46492 / JCM 5070 / NBRC 14893 / NCIMB 12804 / NRRL 8165 / MA-4680</strain>
    </source>
</reference>
<reference key="2">
    <citation type="journal article" date="2003" name="Nat. Biotechnol.">
        <title>Complete genome sequence and comparative analysis of the industrial microorganism Streptomyces avermitilis.</title>
        <authorList>
            <person name="Ikeda H."/>
            <person name="Ishikawa J."/>
            <person name="Hanamoto A."/>
            <person name="Shinose M."/>
            <person name="Kikuchi H."/>
            <person name="Shiba T."/>
            <person name="Sakaki Y."/>
            <person name="Hattori M."/>
            <person name="Omura S."/>
        </authorList>
    </citation>
    <scope>NUCLEOTIDE SEQUENCE [LARGE SCALE GENOMIC DNA]</scope>
    <source>
        <strain>ATCC 31267 / DSM 46492 / JCM 5070 / NBRC 14893 / NCIMB 12804 / NRRL 8165 / MA-4680</strain>
    </source>
</reference>
<sequence length="107" mass="11509">MKIKKGDTVQVITGKDKGKQGKVIAAYPRDERVLVEGVNRVKKHTKAGPTAGGSQAGGIVTTEAPIHVSNVQLVVEKDGNKVVTRVGYRFDDEGNKIRVAKRTGEDI</sequence>
<accession>Q82DN4</accession>
<feature type="chain" id="PRO_0000130726" description="Large ribosomal subunit protein uL24">
    <location>
        <begin position="1"/>
        <end position="107"/>
    </location>
</feature>
<gene>
    <name evidence="1" type="primary">rplX</name>
    <name type="ordered locus">SAV_4937</name>
</gene>
<keyword id="KW-1185">Reference proteome</keyword>
<keyword id="KW-0687">Ribonucleoprotein</keyword>
<keyword id="KW-0689">Ribosomal protein</keyword>
<keyword id="KW-0694">RNA-binding</keyword>
<keyword id="KW-0699">rRNA-binding</keyword>
<evidence type="ECO:0000255" key="1">
    <source>
        <dbReference type="HAMAP-Rule" id="MF_01326"/>
    </source>
</evidence>
<evidence type="ECO:0000305" key="2"/>
<name>RL24_STRAW</name>
<comment type="function">
    <text evidence="1">One of two assembly initiator proteins, it binds directly to the 5'-end of the 23S rRNA, where it nucleates assembly of the 50S subunit.</text>
</comment>
<comment type="function">
    <text evidence="1">One of the proteins that surrounds the polypeptide exit tunnel on the outside of the subunit.</text>
</comment>
<comment type="subunit">
    <text evidence="1">Part of the 50S ribosomal subunit.</text>
</comment>
<comment type="similarity">
    <text evidence="1">Belongs to the universal ribosomal protein uL24 family.</text>
</comment>
<organism>
    <name type="scientific">Streptomyces avermitilis (strain ATCC 31267 / DSM 46492 / JCM 5070 / NBRC 14893 / NCIMB 12804 / NRRL 8165 / MA-4680)</name>
    <dbReference type="NCBI Taxonomy" id="227882"/>
    <lineage>
        <taxon>Bacteria</taxon>
        <taxon>Bacillati</taxon>
        <taxon>Actinomycetota</taxon>
        <taxon>Actinomycetes</taxon>
        <taxon>Kitasatosporales</taxon>
        <taxon>Streptomycetaceae</taxon>
        <taxon>Streptomyces</taxon>
    </lineage>
</organism>
<protein>
    <recommendedName>
        <fullName evidence="1">Large ribosomal subunit protein uL24</fullName>
    </recommendedName>
    <alternativeName>
        <fullName evidence="2">50S ribosomal protein L24</fullName>
    </alternativeName>
</protein>
<dbReference type="EMBL" id="BA000030">
    <property type="protein sequence ID" value="BAC72649.1"/>
    <property type="molecule type" value="Genomic_DNA"/>
</dbReference>
<dbReference type="RefSeq" id="WP_010986350.1">
    <property type="nucleotide sequence ID" value="NZ_JZJK01000077.1"/>
</dbReference>
<dbReference type="SMR" id="Q82DN4"/>
<dbReference type="GeneID" id="41542020"/>
<dbReference type="KEGG" id="sma:SAVERM_4937"/>
<dbReference type="eggNOG" id="COG0198">
    <property type="taxonomic scope" value="Bacteria"/>
</dbReference>
<dbReference type="HOGENOM" id="CLU_093315_2_0_11"/>
<dbReference type="OrthoDB" id="9807419at2"/>
<dbReference type="Proteomes" id="UP000000428">
    <property type="component" value="Chromosome"/>
</dbReference>
<dbReference type="GO" id="GO:1990904">
    <property type="term" value="C:ribonucleoprotein complex"/>
    <property type="evidence" value="ECO:0007669"/>
    <property type="project" value="UniProtKB-KW"/>
</dbReference>
<dbReference type="GO" id="GO:0005840">
    <property type="term" value="C:ribosome"/>
    <property type="evidence" value="ECO:0007669"/>
    <property type="project" value="UniProtKB-KW"/>
</dbReference>
<dbReference type="GO" id="GO:0019843">
    <property type="term" value="F:rRNA binding"/>
    <property type="evidence" value="ECO:0007669"/>
    <property type="project" value="UniProtKB-UniRule"/>
</dbReference>
<dbReference type="GO" id="GO:0003735">
    <property type="term" value="F:structural constituent of ribosome"/>
    <property type="evidence" value="ECO:0007669"/>
    <property type="project" value="InterPro"/>
</dbReference>
<dbReference type="GO" id="GO:0006412">
    <property type="term" value="P:translation"/>
    <property type="evidence" value="ECO:0007669"/>
    <property type="project" value="UniProtKB-UniRule"/>
</dbReference>
<dbReference type="CDD" id="cd06089">
    <property type="entry name" value="KOW_RPL26"/>
    <property type="match status" value="1"/>
</dbReference>
<dbReference type="FunFam" id="2.30.30.30:FF:000004">
    <property type="entry name" value="50S ribosomal protein L24"/>
    <property type="match status" value="1"/>
</dbReference>
<dbReference type="Gene3D" id="2.30.30.30">
    <property type="match status" value="1"/>
</dbReference>
<dbReference type="HAMAP" id="MF_01326_B">
    <property type="entry name" value="Ribosomal_uL24_B"/>
    <property type="match status" value="1"/>
</dbReference>
<dbReference type="InterPro" id="IPR005824">
    <property type="entry name" value="KOW"/>
</dbReference>
<dbReference type="InterPro" id="IPR014722">
    <property type="entry name" value="Rib_uL2_dom2"/>
</dbReference>
<dbReference type="InterPro" id="IPR003256">
    <property type="entry name" value="Ribosomal_uL24"/>
</dbReference>
<dbReference type="InterPro" id="IPR005825">
    <property type="entry name" value="Ribosomal_uL24_CS"/>
</dbReference>
<dbReference type="InterPro" id="IPR041988">
    <property type="entry name" value="Ribosomal_uL24_KOW"/>
</dbReference>
<dbReference type="InterPro" id="IPR008991">
    <property type="entry name" value="Translation_prot_SH3-like_sf"/>
</dbReference>
<dbReference type="NCBIfam" id="TIGR01079">
    <property type="entry name" value="rplX_bact"/>
    <property type="match status" value="1"/>
</dbReference>
<dbReference type="PANTHER" id="PTHR12903">
    <property type="entry name" value="MITOCHONDRIAL RIBOSOMAL PROTEIN L24"/>
    <property type="match status" value="1"/>
</dbReference>
<dbReference type="Pfam" id="PF00467">
    <property type="entry name" value="KOW"/>
    <property type="match status" value="1"/>
</dbReference>
<dbReference type="Pfam" id="PF17136">
    <property type="entry name" value="ribosomal_L24"/>
    <property type="match status" value="1"/>
</dbReference>
<dbReference type="SMART" id="SM00739">
    <property type="entry name" value="KOW"/>
    <property type="match status" value="1"/>
</dbReference>
<dbReference type="SUPFAM" id="SSF50104">
    <property type="entry name" value="Translation proteins SH3-like domain"/>
    <property type="match status" value="1"/>
</dbReference>
<dbReference type="PROSITE" id="PS01108">
    <property type="entry name" value="RIBOSOMAL_L24"/>
    <property type="match status" value="1"/>
</dbReference>
<proteinExistence type="inferred from homology"/>